<accession>P0C6M8</accession>
<dbReference type="EMBL" id="AB037949">
    <property type="protein sequence ID" value="BAB68381.1"/>
    <property type="status" value="ALT_TERM"/>
    <property type="molecule type" value="Genomic_RNA"/>
</dbReference>
<dbReference type="Proteomes" id="UP000008114">
    <property type="component" value="Genome"/>
</dbReference>
<dbReference type="GO" id="GO:0043657">
    <property type="term" value="C:host cell"/>
    <property type="evidence" value="ECO:0007669"/>
    <property type="project" value="GOC"/>
</dbReference>
<dbReference type="GO" id="GO:0044196">
    <property type="term" value="C:host cell nucleolus"/>
    <property type="evidence" value="ECO:0007669"/>
    <property type="project" value="UniProtKB-SubCell"/>
</dbReference>
<dbReference type="GO" id="GO:0044423">
    <property type="term" value="C:virion component"/>
    <property type="evidence" value="ECO:0007669"/>
    <property type="project" value="UniProtKB-KW"/>
</dbReference>
<dbReference type="GO" id="GO:0003723">
    <property type="term" value="F:RNA binding"/>
    <property type="evidence" value="ECO:0007669"/>
    <property type="project" value="UniProtKB-KW"/>
</dbReference>
<dbReference type="GO" id="GO:0046718">
    <property type="term" value="P:symbiont entry into host cell"/>
    <property type="evidence" value="ECO:0007669"/>
    <property type="project" value="UniProtKB-KW"/>
</dbReference>
<dbReference type="GO" id="GO:0075732">
    <property type="term" value="P:viral penetration into host nucleus"/>
    <property type="evidence" value="ECO:0007669"/>
    <property type="project" value="UniProtKB-KW"/>
</dbReference>
<dbReference type="Gene3D" id="4.10.220.40">
    <property type="entry name" value="Delta antigen, N-terminal"/>
    <property type="match status" value="1"/>
</dbReference>
<dbReference type="InterPro" id="IPR027403">
    <property type="entry name" value="Delta_antigen_N"/>
</dbReference>
<dbReference type="InterPro" id="IPR037517">
    <property type="entry name" value="HDAG_dom"/>
</dbReference>
<dbReference type="InterPro" id="IPR002506">
    <property type="entry name" value="HDV_ag"/>
</dbReference>
<dbReference type="Pfam" id="PF01517">
    <property type="entry name" value="HDV_ag"/>
    <property type="match status" value="1"/>
</dbReference>
<dbReference type="SUPFAM" id="SSF58108">
    <property type="entry name" value="Oligomerization domain of hepatitis delta antigen"/>
    <property type="match status" value="1"/>
</dbReference>
<dbReference type="PROSITE" id="PS51838">
    <property type="entry name" value="HDAG"/>
    <property type="match status" value="1"/>
</dbReference>
<sequence length="214" mass="24409">MSQPGARPGSKXREEALEQWVEERKKKRIAEKELRRINKKIKKLEDENPWLGNIVGLLRRKKDEEGGPPAKRPRREDMEIDSTPGRKSKTRGFTDQERRDHRRRKALENKKKQLAGGGKNLSREEEEELRRLARDDDERERRVAGPRPGGVNPMDGPPRGAPGGGFVPSLQGVPESPFSRTGEGIDIRGTQQFPWYGFTPPPPGYYWVPGCTQQ</sequence>
<organismHost>
    <name type="scientific">Homo sapiens</name>
    <name type="common">Human</name>
    <dbReference type="NCBI Taxonomy" id="9606"/>
</organismHost>
<feature type="chain" id="PRO_0000038156" description="Large delta antigen">
    <location>
        <begin position="1"/>
        <end position="211"/>
    </location>
</feature>
<feature type="propeptide" id="PRO_0000396682" description="Removed in mature form" evidence="3">
    <location>
        <begin position="212"/>
        <end position="214"/>
    </location>
</feature>
<feature type="domain" description="HDAg" evidence="5">
    <location>
        <begin position="20"/>
        <end position="194"/>
    </location>
</feature>
<feature type="region of interest" description="Dimerization" evidence="4">
    <location>
        <begin position="12"/>
        <end position="59"/>
    </location>
</feature>
<feature type="region of interest" description="Disordered" evidence="6">
    <location>
        <begin position="56"/>
        <end position="185"/>
    </location>
</feature>
<feature type="region of interest" description="RNA-binding" evidence="5">
    <location>
        <begin position="96"/>
        <end position="106"/>
    </location>
</feature>
<feature type="region of interest" description="RNAPII-binding" evidence="5">
    <location>
        <begin position="129"/>
        <end position="194"/>
    </location>
</feature>
<feature type="region of interest" description="RNA-binding" evidence="5">
    <location>
        <begin position="135"/>
        <end position="145"/>
    </location>
</feature>
<feature type="short sequence motif" description="Nuclear localization signal" evidence="3">
    <location>
        <begin position="65"/>
        <end position="74"/>
    </location>
</feature>
<feature type="compositionally biased region" description="Basic and acidic residues" evidence="6">
    <location>
        <begin position="128"/>
        <end position="143"/>
    </location>
</feature>
<feature type="modified residue" description="Phosphoserine; by host" evidence="3">
    <location>
        <position position="2"/>
    </location>
</feature>
<feature type="modified residue" description="Omega-N-methylated arginine; by host" evidence="2">
    <location>
        <position position="13"/>
    </location>
</feature>
<feature type="modified residue" description="N6-acetyllysine; by host" evidence="2">
    <location>
        <position position="71"/>
    </location>
</feature>
<feature type="modified residue" description="Phosphoserine; by host" evidence="3">
    <location>
        <position position="122"/>
    </location>
</feature>
<feature type="modified residue" description="Phosphoserine; by host" evidence="3">
    <location>
        <position position="176"/>
    </location>
</feature>
<feature type="modified residue" description="Cysteine methyl ester; by host" evidence="3">
    <location>
        <position position="211"/>
    </location>
</feature>
<feature type="lipid moiety-binding region" description="S-farnesyl cysteine; by host" evidence="3">
    <location>
        <position position="211"/>
    </location>
</feature>
<proteinExistence type="inferred from homology"/>
<evidence type="ECO:0000250" key="1"/>
<evidence type="ECO:0000250" key="2">
    <source>
        <dbReference type="UniProtKB" id="P0C6L3"/>
    </source>
</evidence>
<evidence type="ECO:0000250" key="3">
    <source>
        <dbReference type="UniProtKB" id="P29996"/>
    </source>
</evidence>
<evidence type="ECO:0000255" key="4"/>
<evidence type="ECO:0000255" key="5">
    <source>
        <dbReference type="PROSITE-ProRule" id="PRU01183"/>
    </source>
</evidence>
<evidence type="ECO:0000256" key="6">
    <source>
        <dbReference type="SAM" id="MobiDB-lite"/>
    </source>
</evidence>
<evidence type="ECO:0000269" key="7">
    <source>
    </source>
</evidence>
<evidence type="ECO:0000305" key="8"/>
<keyword id="KW-0007">Acetylation</keyword>
<keyword id="KW-1048">Host nucleus</keyword>
<keyword id="KW-0449">Lipoprotein</keyword>
<keyword id="KW-0488">Methylation</keyword>
<keyword id="KW-0597">Phosphoprotein</keyword>
<keyword id="KW-0636">Prenylation</keyword>
<keyword id="KW-0691">RNA editing</keyword>
<keyword id="KW-0694">RNA-binding</keyword>
<keyword id="KW-1163">Viral penetration into host nucleus</keyword>
<keyword id="KW-0946">Virion</keyword>
<keyword id="KW-1160">Virus entry into host cell</keyword>
<name>LHDAG_HDVV1</name>
<comment type="function">
    <text evidence="1">Following virus entry into host cell, provides nuclear import of HDV RNPs thanks to its nuclear localization signal. Needs co-infection with hepatitis B virus to provide surface proteins, otherwise there is no packaging or budding. Packages the HDV ribonucleoprotein in hepatitis B virus empty particles. Interacts with both HDV genomic RNA and cytoplasmic tail of HBsAg. May inhibit viral RNA replication (By similarity).</text>
</comment>
<comment type="subunit">
    <text evidence="1">Homodimer. Homooctamer. Interacts with HBV HBsAg. May interact with clathrin to induce virion budding (By similarity).</text>
</comment>
<comment type="subcellular location">
    <subcellularLocation>
        <location>Virion</location>
    </subcellularLocation>
    <subcellularLocation>
        <location>Host nucleus</location>
        <location>Host nucleolus</location>
    </subcellularLocation>
    <text evidence="1">isoprenylated in the cytoplasm, and translocates in the nucleus possibly after phosphorylation. Translocates after to nuclear speckle, then to the ER membrane where interaction with Hepatitis B virus antigene takes place (By similarity).</text>
</comment>
<comment type="PTM">
    <text evidence="1">Prenylated by host farnesyl-transferase in the cytoplasm prior to nucleus translocation.</text>
</comment>
<comment type="PTM">
    <text evidence="1">Phosphorylated at serines by host CK2 and other kinases. phosphorylation does not seem to be important for its function (By similarity).</text>
</comment>
<comment type="RNA editing">
    <location>
        <position position="196" evidence="7"/>
    </location>
    <text evidence="1">Partially edited. RNA editing at this position occurs on the antigenomic strand and consists of a conversion of A to G catalyzed by the cellular enzyme ADAR1. The unedited RNA version gives rise to the small delta antigen (AC Q91DH7), which ends with a nonsense codon at position 196. In the edited version, this amber codon is modified to a tryptophan codon and gives rise to the large delta antigen protein. S-HDAg suppresses editing of non-replicating antigenomic RNA, thereby regulating the extent of editing (By similarity).</text>
</comment>
<comment type="miscellaneous">
    <text>This strain belongs to the genotype III found only among cases in South America and which causes a more severe form of infection than genotypes I and II.</text>
</comment>
<comment type="similarity">
    <text evidence="8">Belongs to the hepatitis delta antigen family.</text>
</comment>
<reference key="1">
    <citation type="journal article" date="2001" name="J. Gen. Virol.">
        <title>Characterization of hepatitis D virus genotype III among Yucpa Indians in Venezuela.</title>
        <authorList>
            <person name="Nakano T."/>
            <person name="Shapiro C.N."/>
            <person name="Hadler S.C."/>
            <person name="Casey J.L."/>
            <person name="Mizokami M."/>
            <person name="Orito E."/>
            <person name="Robertson B.H."/>
        </authorList>
    </citation>
    <scope>NUCLEOTIDE SEQUENCE [GENOMIC RNA]</scope>
    <scope>RNA EDITING</scope>
</reference>
<reference key="2">
    <citation type="journal article" date="2005" name="Acta Virol.">
        <title>Hepatitis D.</title>
        <authorList>
            <person name="Husa P."/>
            <person name="Linhartova A."/>
            <person name="Nemecek V."/>
            <person name="Husova L."/>
        </authorList>
    </citation>
    <scope>REVIEW</scope>
</reference>
<reference key="3">
    <citation type="journal article" date="2006" name="Curr. Top. Microbiol. Immunol.">
        <title>Post-translational modification of delta antigen of hepatitis D virus.</title>
        <authorList>
            <person name="Huang W.H."/>
            <person name="Chen C.W."/>
            <person name="Wu H.L."/>
            <person name="Chen P.J."/>
        </authorList>
    </citation>
    <scope>REVIEW</scope>
</reference>
<protein>
    <recommendedName>
        <fullName>Large delta antigen</fullName>
        <shortName>L-HDAg</shortName>
    </recommendedName>
    <alternativeName>
        <fullName>p27</fullName>
    </alternativeName>
</protein>
<organism>
    <name type="scientific">Hepatitis delta virus genotype III (isolate VnzD8624)</name>
    <name type="common">HDV</name>
    <dbReference type="NCBI Taxonomy" id="261993"/>
    <lineage>
        <taxon>Viruses</taxon>
        <taxon>Ribozyviria</taxon>
        <taxon>Kolmioviridae</taxon>
        <taxon>Deltavirus</taxon>
        <taxon>Hepatitis delta virus</taxon>
    </lineage>
</organism>